<accession>P53922</accession>
<reference key="1">
    <citation type="journal article" date="1997" name="Nature">
        <title>The nucleotide sequence of Saccharomyces cerevisiae chromosome XIV and its evolutionary implications.</title>
        <authorList>
            <person name="Philippsen P."/>
            <person name="Kleine K."/>
            <person name="Poehlmann R."/>
            <person name="Duesterhoeft A."/>
            <person name="Hamberg K."/>
            <person name="Hegemann J.H."/>
            <person name="Obermaier B."/>
            <person name="Urrestarazu L.A."/>
            <person name="Aert R."/>
            <person name="Albermann K."/>
            <person name="Altmann R."/>
            <person name="Andre B."/>
            <person name="Baladron V."/>
            <person name="Ballesta J.P.G."/>
            <person name="Becam A.-M."/>
            <person name="Beinhauer J.D."/>
            <person name="Boskovic J."/>
            <person name="Buitrago M.J."/>
            <person name="Bussereau F."/>
            <person name="Coster F."/>
            <person name="Crouzet M."/>
            <person name="D'Angelo M."/>
            <person name="Dal Pero F."/>
            <person name="De Antoni A."/>
            <person name="del Rey F."/>
            <person name="Doignon F."/>
            <person name="Domdey H."/>
            <person name="Dubois E."/>
            <person name="Fiedler T.A."/>
            <person name="Fleig U."/>
            <person name="Floeth M."/>
            <person name="Fritz C."/>
            <person name="Gaillardin C."/>
            <person name="Garcia-Cantalejo J.M."/>
            <person name="Glansdorff N."/>
            <person name="Goffeau A."/>
            <person name="Gueldener U."/>
            <person name="Herbert C.J."/>
            <person name="Heumann K."/>
            <person name="Heuss-Neitzel D."/>
            <person name="Hilbert H."/>
            <person name="Hinni K."/>
            <person name="Iraqui Houssaini I."/>
            <person name="Jacquet M."/>
            <person name="Jimenez A."/>
            <person name="Jonniaux J.-L."/>
            <person name="Karpfinger-Hartl L."/>
            <person name="Lanfranchi G."/>
            <person name="Lepingle A."/>
            <person name="Levesque H."/>
            <person name="Lyck R."/>
            <person name="Maftahi M."/>
            <person name="Mallet L."/>
            <person name="Maurer C.T.C."/>
            <person name="Messenguy F."/>
            <person name="Mewes H.-W."/>
            <person name="Moestl D."/>
            <person name="Nasr F."/>
            <person name="Nicaud J.-M."/>
            <person name="Niedenthal R.K."/>
            <person name="Pandolfo D."/>
            <person name="Pierard A."/>
            <person name="Piravandi E."/>
            <person name="Planta R.J."/>
            <person name="Pohl T.M."/>
            <person name="Purnelle B."/>
            <person name="Rebischung C."/>
            <person name="Remacha M.A."/>
            <person name="Revuelta J.L."/>
            <person name="Rinke M."/>
            <person name="Saiz J.E."/>
            <person name="Sartorello F."/>
            <person name="Scherens B."/>
            <person name="Sen-Gupta M."/>
            <person name="Soler-Mira A."/>
            <person name="Urbanus J.H.M."/>
            <person name="Valle G."/>
            <person name="Van Dyck L."/>
            <person name="Verhasselt P."/>
            <person name="Vierendeels F."/>
            <person name="Vissers S."/>
            <person name="Voet M."/>
            <person name="Volckaert G."/>
            <person name="Wach A."/>
            <person name="Wambutt R."/>
            <person name="Wedler H."/>
            <person name="Zollner A."/>
            <person name="Hani J."/>
        </authorList>
    </citation>
    <scope>NUCLEOTIDE SEQUENCE [LARGE SCALE GENOMIC DNA]</scope>
    <source>
        <strain>ATCC 204508 / S288c</strain>
    </source>
</reference>
<reference key="2">
    <citation type="journal article" date="2014" name="G3 (Bethesda)">
        <title>The reference genome sequence of Saccharomyces cerevisiae: Then and now.</title>
        <authorList>
            <person name="Engel S.R."/>
            <person name="Dietrich F.S."/>
            <person name="Fisk D.G."/>
            <person name="Binkley G."/>
            <person name="Balakrishnan R."/>
            <person name="Costanzo M.C."/>
            <person name="Dwight S.S."/>
            <person name="Hitz B.C."/>
            <person name="Karra K."/>
            <person name="Nash R.S."/>
            <person name="Weng S."/>
            <person name="Wong E.D."/>
            <person name="Lloyd P."/>
            <person name="Skrzypek M.S."/>
            <person name="Miyasato S.R."/>
            <person name="Simison M."/>
            <person name="Cherry J.M."/>
        </authorList>
    </citation>
    <scope>GENOME REANNOTATION</scope>
    <source>
        <strain>ATCC 204508 / S288c</strain>
    </source>
</reference>
<gene>
    <name type="ordered locus">YNL120C</name>
    <name type="ORF">N1909</name>
</gene>
<organism>
    <name type="scientific">Saccharomyces cerevisiae (strain ATCC 204508 / S288c)</name>
    <name type="common">Baker's yeast</name>
    <dbReference type="NCBI Taxonomy" id="559292"/>
    <lineage>
        <taxon>Eukaryota</taxon>
        <taxon>Fungi</taxon>
        <taxon>Dikarya</taxon>
        <taxon>Ascomycota</taxon>
        <taxon>Saccharomycotina</taxon>
        <taxon>Saccharomycetes</taxon>
        <taxon>Saccharomycetales</taxon>
        <taxon>Saccharomycetaceae</taxon>
        <taxon>Saccharomyces</taxon>
    </lineage>
</organism>
<feature type="chain" id="PRO_0000203431" description="Putative uncharacterized protein YNL120C">
    <location>
        <begin position="1"/>
        <end position="161"/>
    </location>
</feature>
<evidence type="ECO:0000305" key="1"/>
<evidence type="ECO:0000305" key="2">
    <source>
    </source>
</evidence>
<proteinExistence type="uncertain"/>
<dbReference type="EMBL" id="Z69382">
    <property type="protein sequence ID" value="CAA93387.1"/>
    <property type="molecule type" value="Genomic_DNA"/>
</dbReference>
<dbReference type="EMBL" id="Z71396">
    <property type="protein sequence ID" value="CAA96000.1"/>
    <property type="molecule type" value="Genomic_DNA"/>
</dbReference>
<dbReference type="PIR" id="S63061">
    <property type="entry name" value="S63061"/>
</dbReference>
<dbReference type="PaxDb" id="4932-YNL120C"/>
<dbReference type="EnsemblFungi" id="YNL120C_mRNA">
    <property type="protein sequence ID" value="YNL120C"/>
    <property type="gene ID" value="YNL120C"/>
</dbReference>
<dbReference type="AGR" id="SGD:S000005064"/>
<dbReference type="SGD" id="S000005064">
    <property type="gene designation" value="YNL120C"/>
</dbReference>
<dbReference type="HOGENOM" id="CLU_1645063_0_0_1"/>
<sequence>MIKVDTSDALLKNSLTSIKWTLNMLDILFSCDIFSLIKDSIRSLITETFSSVNTVSTSTVKPVRLLCCLVCSNSKSCTISNITRDPESECDKGSRILETDPSFSNGYITLNRFLKYSSFIICFLCLVLTNLMKHSSQNFSFLDSTVAGFLADAGHLWHSIT</sequence>
<name>YNM0_YEAST</name>
<comment type="miscellaneous">
    <text evidence="1">Completely overlaps NCS2.</text>
</comment>
<comment type="caution">
    <text evidence="2">Product of a dubious gene prediction unlikely to encode a functional protein. Because of that it is not part of the S.cerevisiae S288c complete/reference proteome set.</text>
</comment>
<protein>
    <recommendedName>
        <fullName>Putative uncharacterized protein YNL120C</fullName>
    </recommendedName>
</protein>